<name>RL30_METM5</name>
<comment type="subunit">
    <text evidence="1">Part of the 50S ribosomal subunit.</text>
</comment>
<comment type="similarity">
    <text evidence="1">Belongs to the universal ribosomal protein uL30 family.</text>
</comment>
<sequence>MAYAVVRVRGSVGVRGNIADTMKMLRLHRVNHCVVIPDNEHYTGMIKKVKDYVTYGEIDKDTLVALILKRGRLPGNKRLTEELVKELTELPVEELAEKIIAGEIKIKDTPIKPVFRLHPPRKGYDRAGVKKGFSIGGALGYRSGKINDLLNKMM</sequence>
<gene>
    <name evidence="1" type="primary">rpl30</name>
    <name type="ordered locus">MmarC5_0158</name>
</gene>
<dbReference type="EMBL" id="CP000609">
    <property type="protein sequence ID" value="ABO34475.1"/>
    <property type="molecule type" value="Genomic_DNA"/>
</dbReference>
<dbReference type="RefSeq" id="WP_011867935.1">
    <property type="nucleotide sequence ID" value="NC_009135.1"/>
</dbReference>
<dbReference type="SMR" id="A4FVT8"/>
<dbReference type="STRING" id="402880.MmarC5_0158"/>
<dbReference type="GeneID" id="4927781"/>
<dbReference type="KEGG" id="mmq:MmarC5_0158"/>
<dbReference type="eggNOG" id="arCOG04086">
    <property type="taxonomic scope" value="Archaea"/>
</dbReference>
<dbReference type="HOGENOM" id="CLU_055156_6_0_2"/>
<dbReference type="OrthoDB" id="6379at2157"/>
<dbReference type="Proteomes" id="UP000000253">
    <property type="component" value="Chromosome"/>
</dbReference>
<dbReference type="GO" id="GO:0022625">
    <property type="term" value="C:cytosolic large ribosomal subunit"/>
    <property type="evidence" value="ECO:0007669"/>
    <property type="project" value="TreeGrafter"/>
</dbReference>
<dbReference type="GO" id="GO:0003723">
    <property type="term" value="F:RNA binding"/>
    <property type="evidence" value="ECO:0007669"/>
    <property type="project" value="TreeGrafter"/>
</dbReference>
<dbReference type="GO" id="GO:0003735">
    <property type="term" value="F:structural constituent of ribosome"/>
    <property type="evidence" value="ECO:0007669"/>
    <property type="project" value="InterPro"/>
</dbReference>
<dbReference type="GO" id="GO:0000463">
    <property type="term" value="P:maturation of LSU-rRNA from tricistronic rRNA transcript (SSU-rRNA, 5.8S rRNA, LSU-rRNA)"/>
    <property type="evidence" value="ECO:0007669"/>
    <property type="project" value="TreeGrafter"/>
</dbReference>
<dbReference type="GO" id="GO:0006412">
    <property type="term" value="P:translation"/>
    <property type="evidence" value="ECO:0007669"/>
    <property type="project" value="UniProtKB-UniRule"/>
</dbReference>
<dbReference type="CDD" id="cd01657">
    <property type="entry name" value="Ribosomal_L7_archeal_euk"/>
    <property type="match status" value="1"/>
</dbReference>
<dbReference type="Gene3D" id="1.10.15.30">
    <property type="match status" value="1"/>
</dbReference>
<dbReference type="Gene3D" id="3.30.1390.20">
    <property type="entry name" value="Ribosomal protein L30, ferredoxin-like fold domain"/>
    <property type="match status" value="1"/>
</dbReference>
<dbReference type="HAMAP" id="MF_01371_A">
    <property type="entry name" value="Ribosomal_uL30_A"/>
    <property type="match status" value="1"/>
</dbReference>
<dbReference type="InterPro" id="IPR036919">
    <property type="entry name" value="Ribo_uL30_ferredoxin-like_sf"/>
</dbReference>
<dbReference type="InterPro" id="IPR039699">
    <property type="entry name" value="Ribosomal_uL30"/>
</dbReference>
<dbReference type="InterPro" id="IPR005997">
    <property type="entry name" value="Ribosomal_uL30_arc"/>
</dbReference>
<dbReference type="InterPro" id="IPR018038">
    <property type="entry name" value="Ribosomal_uL30_CS"/>
</dbReference>
<dbReference type="InterPro" id="IPR035808">
    <property type="entry name" value="Ribosomal_uL30_euk_arc"/>
</dbReference>
<dbReference type="InterPro" id="IPR016082">
    <property type="entry name" value="Ribosomal_uL30_ferredoxin-like"/>
</dbReference>
<dbReference type="NCBIfam" id="NF004711">
    <property type="entry name" value="PRK06049.1"/>
    <property type="match status" value="1"/>
</dbReference>
<dbReference type="NCBIfam" id="TIGR01309">
    <property type="entry name" value="uL30_arch"/>
    <property type="match status" value="1"/>
</dbReference>
<dbReference type="PANTHER" id="PTHR11524">
    <property type="entry name" value="60S RIBOSOMAL PROTEIN L7"/>
    <property type="match status" value="1"/>
</dbReference>
<dbReference type="PANTHER" id="PTHR11524:SF16">
    <property type="entry name" value="LARGE RIBOSOMAL SUBUNIT PROTEIN UL30"/>
    <property type="match status" value="1"/>
</dbReference>
<dbReference type="Pfam" id="PF00327">
    <property type="entry name" value="Ribosomal_L30"/>
    <property type="match status" value="1"/>
</dbReference>
<dbReference type="SUPFAM" id="SSF55129">
    <property type="entry name" value="Ribosomal protein L30p/L7e"/>
    <property type="match status" value="1"/>
</dbReference>
<dbReference type="PROSITE" id="PS00634">
    <property type="entry name" value="RIBOSOMAL_L30"/>
    <property type="match status" value="1"/>
</dbReference>
<keyword id="KW-0687">Ribonucleoprotein</keyword>
<keyword id="KW-0689">Ribosomal protein</keyword>
<evidence type="ECO:0000255" key="1">
    <source>
        <dbReference type="HAMAP-Rule" id="MF_01371"/>
    </source>
</evidence>
<evidence type="ECO:0000305" key="2"/>
<proteinExistence type="inferred from homology"/>
<accession>A4FVT8</accession>
<organism>
    <name type="scientific">Methanococcus maripaludis (strain C5 / ATCC BAA-1333)</name>
    <dbReference type="NCBI Taxonomy" id="402880"/>
    <lineage>
        <taxon>Archaea</taxon>
        <taxon>Methanobacteriati</taxon>
        <taxon>Methanobacteriota</taxon>
        <taxon>Methanomada group</taxon>
        <taxon>Methanococci</taxon>
        <taxon>Methanococcales</taxon>
        <taxon>Methanococcaceae</taxon>
        <taxon>Methanococcus</taxon>
    </lineage>
</organism>
<reference key="1">
    <citation type="submission" date="2007-03" db="EMBL/GenBank/DDBJ databases">
        <title>Complete sequence of chromosome of Methanococcus maripaludis C5.</title>
        <authorList>
            <consortium name="US DOE Joint Genome Institute"/>
            <person name="Copeland A."/>
            <person name="Lucas S."/>
            <person name="Lapidus A."/>
            <person name="Barry K."/>
            <person name="Glavina del Rio T."/>
            <person name="Dalin E."/>
            <person name="Tice H."/>
            <person name="Pitluck S."/>
            <person name="Chertkov O."/>
            <person name="Brettin T."/>
            <person name="Bruce D."/>
            <person name="Han C."/>
            <person name="Detter J.C."/>
            <person name="Schmutz J."/>
            <person name="Larimer F."/>
            <person name="Land M."/>
            <person name="Hauser L."/>
            <person name="Kyrpides N."/>
            <person name="Mikhailova N."/>
            <person name="Sieprawska-Lupa M."/>
            <person name="Whitman W.B."/>
            <person name="Richardson P."/>
        </authorList>
    </citation>
    <scope>NUCLEOTIDE SEQUENCE [LARGE SCALE GENOMIC DNA]</scope>
    <source>
        <strain>C5 / ATCC BAA-1333</strain>
    </source>
</reference>
<feature type="chain" id="PRO_1000056068" description="Large ribosomal subunit protein uL30">
    <location>
        <begin position="1"/>
        <end position="154"/>
    </location>
</feature>
<protein>
    <recommendedName>
        <fullName evidence="1">Large ribosomal subunit protein uL30</fullName>
    </recommendedName>
    <alternativeName>
        <fullName evidence="2">50S ribosomal protein L30</fullName>
    </alternativeName>
</protein>